<name>ISPE_STAAE</name>
<reference key="1">
    <citation type="journal article" date="2008" name="J. Bacteriol.">
        <title>Genome sequence of Staphylococcus aureus strain Newman and comparative analysis of staphylococcal genomes: polymorphism and evolution of two major pathogenicity islands.</title>
        <authorList>
            <person name="Baba T."/>
            <person name="Bae T."/>
            <person name="Schneewind O."/>
            <person name="Takeuchi F."/>
            <person name="Hiramatsu K."/>
        </authorList>
    </citation>
    <scope>NUCLEOTIDE SEQUENCE [LARGE SCALE GENOMIC DNA]</scope>
    <source>
        <strain>Newman</strain>
    </source>
</reference>
<organism>
    <name type="scientific">Staphylococcus aureus (strain Newman)</name>
    <dbReference type="NCBI Taxonomy" id="426430"/>
    <lineage>
        <taxon>Bacteria</taxon>
        <taxon>Bacillati</taxon>
        <taxon>Bacillota</taxon>
        <taxon>Bacilli</taxon>
        <taxon>Bacillales</taxon>
        <taxon>Staphylococcaceae</taxon>
        <taxon>Staphylococcus</taxon>
    </lineage>
</organism>
<dbReference type="EC" id="2.7.1.148" evidence="1"/>
<dbReference type="EMBL" id="AP009351">
    <property type="protein sequence ID" value="BAF66730.1"/>
    <property type="molecule type" value="Genomic_DNA"/>
</dbReference>
<dbReference type="SMR" id="A6QEE8"/>
<dbReference type="KEGG" id="sae:NWMN_0458"/>
<dbReference type="HOGENOM" id="CLU_053057_1_1_9"/>
<dbReference type="Proteomes" id="UP000006386">
    <property type="component" value="Chromosome"/>
</dbReference>
<dbReference type="GO" id="GO:0050515">
    <property type="term" value="F:4-(cytidine 5'-diphospho)-2-C-methyl-D-erythritol kinase activity"/>
    <property type="evidence" value="ECO:0007669"/>
    <property type="project" value="UniProtKB-UniRule"/>
</dbReference>
<dbReference type="GO" id="GO:0005524">
    <property type="term" value="F:ATP binding"/>
    <property type="evidence" value="ECO:0007669"/>
    <property type="project" value="UniProtKB-UniRule"/>
</dbReference>
<dbReference type="GO" id="GO:0016114">
    <property type="term" value="P:terpenoid biosynthetic process"/>
    <property type="evidence" value="ECO:0007669"/>
    <property type="project" value="InterPro"/>
</dbReference>
<dbReference type="FunFam" id="3.30.230.10:FF:000029">
    <property type="entry name" value="4-diphosphocytidyl-2-C-methyl-D-erythritol kinase"/>
    <property type="match status" value="1"/>
</dbReference>
<dbReference type="FunFam" id="3.30.70.890:FF:000006">
    <property type="entry name" value="4-diphosphocytidyl-2-C-methyl-D-erythritol kinase"/>
    <property type="match status" value="1"/>
</dbReference>
<dbReference type="Gene3D" id="3.30.230.10">
    <property type="match status" value="1"/>
</dbReference>
<dbReference type="Gene3D" id="3.30.70.890">
    <property type="entry name" value="GHMP kinase, C-terminal domain"/>
    <property type="match status" value="1"/>
</dbReference>
<dbReference type="HAMAP" id="MF_00061">
    <property type="entry name" value="IspE"/>
    <property type="match status" value="1"/>
</dbReference>
<dbReference type="InterPro" id="IPR013750">
    <property type="entry name" value="GHMP_kinase_C_dom"/>
</dbReference>
<dbReference type="InterPro" id="IPR036554">
    <property type="entry name" value="GHMP_kinase_C_sf"/>
</dbReference>
<dbReference type="InterPro" id="IPR006204">
    <property type="entry name" value="GHMP_kinase_N_dom"/>
</dbReference>
<dbReference type="InterPro" id="IPR004424">
    <property type="entry name" value="IspE"/>
</dbReference>
<dbReference type="InterPro" id="IPR020568">
    <property type="entry name" value="Ribosomal_Su5_D2-typ_SF"/>
</dbReference>
<dbReference type="InterPro" id="IPR014721">
    <property type="entry name" value="Ribsml_uS5_D2-typ_fold_subgr"/>
</dbReference>
<dbReference type="NCBIfam" id="TIGR00154">
    <property type="entry name" value="ispE"/>
    <property type="match status" value="1"/>
</dbReference>
<dbReference type="PANTHER" id="PTHR43527">
    <property type="entry name" value="4-DIPHOSPHOCYTIDYL-2-C-METHYL-D-ERYTHRITOL KINASE, CHLOROPLASTIC"/>
    <property type="match status" value="1"/>
</dbReference>
<dbReference type="PANTHER" id="PTHR43527:SF2">
    <property type="entry name" value="4-DIPHOSPHOCYTIDYL-2-C-METHYL-D-ERYTHRITOL KINASE, CHLOROPLASTIC"/>
    <property type="match status" value="1"/>
</dbReference>
<dbReference type="Pfam" id="PF08544">
    <property type="entry name" value="GHMP_kinases_C"/>
    <property type="match status" value="1"/>
</dbReference>
<dbReference type="Pfam" id="PF00288">
    <property type="entry name" value="GHMP_kinases_N"/>
    <property type="match status" value="1"/>
</dbReference>
<dbReference type="PIRSF" id="PIRSF010376">
    <property type="entry name" value="IspE"/>
    <property type="match status" value="1"/>
</dbReference>
<dbReference type="SUPFAM" id="SSF55060">
    <property type="entry name" value="GHMP Kinase, C-terminal domain"/>
    <property type="match status" value="1"/>
</dbReference>
<dbReference type="SUPFAM" id="SSF54211">
    <property type="entry name" value="Ribosomal protein S5 domain 2-like"/>
    <property type="match status" value="1"/>
</dbReference>
<evidence type="ECO:0000255" key="1">
    <source>
        <dbReference type="HAMAP-Rule" id="MF_00061"/>
    </source>
</evidence>
<protein>
    <recommendedName>
        <fullName evidence="1">Putative 4-diphosphocytidyl-2-C-methyl-D-erythritol kinase</fullName>
        <shortName evidence="1">CMK</shortName>
        <ecNumber evidence="1">2.7.1.148</ecNumber>
    </recommendedName>
    <alternativeName>
        <fullName evidence="1">4-(cytidine-5'-diphospho)-2-C-methyl-D-erythritol kinase</fullName>
    </alternativeName>
</protein>
<gene>
    <name type="ordered locus">NWMN_0458</name>
</gene>
<proteinExistence type="inferred from homology"/>
<accession>A6QEE8</accession>
<feature type="chain" id="PRO_1000071165" description="Putative 4-diphosphocytidyl-2-C-methyl-D-erythritol kinase">
    <location>
        <begin position="1"/>
        <end position="282"/>
    </location>
</feature>
<feature type="active site" evidence="1">
    <location>
        <position position="9"/>
    </location>
</feature>
<feature type="active site" evidence="1">
    <location>
        <position position="135"/>
    </location>
</feature>
<feature type="binding site" evidence="1">
    <location>
        <begin position="93"/>
        <end position="103"/>
    </location>
    <ligand>
        <name>ATP</name>
        <dbReference type="ChEBI" id="CHEBI:30616"/>
    </ligand>
</feature>
<comment type="function">
    <text evidence="1">Catalyzes the phosphorylation of the position 2 hydroxy group of 4-diphosphocytidyl-2C-methyl-D-erythritol.</text>
</comment>
<comment type="catalytic activity">
    <reaction evidence="1">
        <text>4-CDP-2-C-methyl-D-erythritol + ATP = 4-CDP-2-C-methyl-D-erythritol 2-phosphate + ADP + H(+)</text>
        <dbReference type="Rhea" id="RHEA:18437"/>
        <dbReference type="ChEBI" id="CHEBI:15378"/>
        <dbReference type="ChEBI" id="CHEBI:30616"/>
        <dbReference type="ChEBI" id="CHEBI:57823"/>
        <dbReference type="ChEBI" id="CHEBI:57919"/>
        <dbReference type="ChEBI" id="CHEBI:456216"/>
        <dbReference type="EC" id="2.7.1.148"/>
    </reaction>
</comment>
<comment type="similarity">
    <text evidence="1">Belongs to the GHMP kinase family. IspE subfamily.</text>
</comment>
<keyword id="KW-0067">ATP-binding</keyword>
<keyword id="KW-0418">Kinase</keyword>
<keyword id="KW-0547">Nucleotide-binding</keyword>
<keyword id="KW-0808">Transferase</keyword>
<sequence>MIYETAPAKINFTLDTLFKRNDGYHEIEMIMTTVDLNDRLTFHKRKDRKIVVEIEHNYVPSNHKNLAYRAAQLFIEQYQLKQGVTISIDKEIPVSAGLAGGSADAAATLRGLNRLFDIGASLEELALLGSKIGTDIPFCIYNKTALCTGRGEKIEFLNKPPSAWVILAKPNLGISSPDIFKLINLDKRYDVHTKMCYEALENRDYQQLCQSLSNRLEPISVSKHPQIDKLKNNMLKSGADGALMSGSGPTVYGLARKESQAKNIYNAVNGCCNEVYLVRLLG</sequence>